<reference key="1">
    <citation type="journal article" date="2007" name="PLoS ONE">
        <title>Genome sequencing shows that European isolates of Francisella tularensis subspecies tularensis are almost identical to US laboratory strain Schu S4.</title>
        <authorList>
            <person name="Chaudhuri R.R."/>
            <person name="Ren C.-P."/>
            <person name="Desmond L."/>
            <person name="Vincent G.A."/>
            <person name="Silman N.J."/>
            <person name="Brehm J.K."/>
            <person name="Elmore M.J."/>
            <person name="Hudson M.J."/>
            <person name="Forsman M."/>
            <person name="Isherwood K.E."/>
            <person name="Gurycova D."/>
            <person name="Minton N.P."/>
            <person name="Titball R.W."/>
            <person name="Pallen M.J."/>
            <person name="Vipond R."/>
        </authorList>
    </citation>
    <scope>NUCLEOTIDE SEQUENCE [LARGE SCALE GENOMIC DNA]</scope>
    <source>
        <strain>FSC 198</strain>
    </source>
</reference>
<keyword id="KW-0143">Chaperone</keyword>
<keyword id="KW-0963">Cytoplasm</keyword>
<keyword id="KW-0653">Protein transport</keyword>
<keyword id="KW-0811">Translocation</keyword>
<keyword id="KW-0813">Transport</keyword>
<dbReference type="EMBL" id="AM286280">
    <property type="protein sequence ID" value="CAL09765.1"/>
    <property type="molecule type" value="Genomic_DNA"/>
</dbReference>
<dbReference type="SMR" id="Q14FQ2"/>
<dbReference type="KEGG" id="ftf:FTF1749"/>
<dbReference type="HOGENOM" id="CLU_111574_1_0_6"/>
<dbReference type="GO" id="GO:0005737">
    <property type="term" value="C:cytoplasm"/>
    <property type="evidence" value="ECO:0007669"/>
    <property type="project" value="UniProtKB-SubCell"/>
</dbReference>
<dbReference type="GO" id="GO:0051082">
    <property type="term" value="F:unfolded protein binding"/>
    <property type="evidence" value="ECO:0007669"/>
    <property type="project" value="InterPro"/>
</dbReference>
<dbReference type="GO" id="GO:0006457">
    <property type="term" value="P:protein folding"/>
    <property type="evidence" value="ECO:0007669"/>
    <property type="project" value="UniProtKB-UniRule"/>
</dbReference>
<dbReference type="GO" id="GO:0051262">
    <property type="term" value="P:protein tetramerization"/>
    <property type="evidence" value="ECO:0007669"/>
    <property type="project" value="InterPro"/>
</dbReference>
<dbReference type="GO" id="GO:0015031">
    <property type="term" value="P:protein transport"/>
    <property type="evidence" value="ECO:0007669"/>
    <property type="project" value="UniProtKB-UniRule"/>
</dbReference>
<dbReference type="Gene3D" id="3.10.420.10">
    <property type="entry name" value="SecB-like"/>
    <property type="match status" value="1"/>
</dbReference>
<dbReference type="HAMAP" id="MF_00821">
    <property type="entry name" value="SecB"/>
    <property type="match status" value="1"/>
</dbReference>
<dbReference type="InterPro" id="IPR003708">
    <property type="entry name" value="SecB"/>
</dbReference>
<dbReference type="InterPro" id="IPR035958">
    <property type="entry name" value="SecB-like_sf"/>
</dbReference>
<dbReference type="NCBIfam" id="NF004393">
    <property type="entry name" value="PRK05751.1-4"/>
    <property type="match status" value="1"/>
</dbReference>
<dbReference type="NCBIfam" id="NF009590">
    <property type="entry name" value="PRK13031.1"/>
    <property type="match status" value="1"/>
</dbReference>
<dbReference type="NCBIfam" id="TIGR00809">
    <property type="entry name" value="secB"/>
    <property type="match status" value="1"/>
</dbReference>
<dbReference type="PANTHER" id="PTHR36918">
    <property type="match status" value="1"/>
</dbReference>
<dbReference type="PANTHER" id="PTHR36918:SF1">
    <property type="entry name" value="PROTEIN-EXPORT PROTEIN SECB"/>
    <property type="match status" value="1"/>
</dbReference>
<dbReference type="Pfam" id="PF02556">
    <property type="entry name" value="SecB"/>
    <property type="match status" value="1"/>
</dbReference>
<dbReference type="PRINTS" id="PR01594">
    <property type="entry name" value="SECBCHAPRONE"/>
</dbReference>
<dbReference type="SUPFAM" id="SSF54611">
    <property type="entry name" value="SecB-like"/>
    <property type="match status" value="1"/>
</dbReference>
<evidence type="ECO:0000255" key="1">
    <source>
        <dbReference type="HAMAP-Rule" id="MF_00821"/>
    </source>
</evidence>
<comment type="function">
    <text evidence="1">One of the proteins required for the normal export of preproteins out of the cell cytoplasm. It is a molecular chaperone that binds to a subset of precursor proteins, maintaining them in a translocation-competent state. It also specifically binds to its receptor SecA.</text>
</comment>
<comment type="subunit">
    <text evidence="1">Homotetramer, a dimer of dimers. One homotetramer interacts with 1 SecA dimer.</text>
</comment>
<comment type="subcellular location">
    <subcellularLocation>
        <location evidence="1">Cytoplasm</location>
    </subcellularLocation>
</comment>
<comment type="similarity">
    <text evidence="1">Belongs to the SecB family.</text>
</comment>
<sequence length="149" mass="16900">MDQQAQPQFQIQKVYVKDLSFSIPNSDKIWTTNWKPELHTDLKVEATKLPEENTYETVLTLEVKVENDGMVAFEAEVKQAGIFTVANMQEAQIEHAKKAFCPNILYHYAREAISDLVISGGFPQLCLSAVNFDAMYQDSLKESADSKQH</sequence>
<accession>Q14FQ2</accession>
<feature type="chain" id="PRO_0000318235" description="Protein-export protein SecB 2">
    <location>
        <begin position="1"/>
        <end position="149"/>
    </location>
</feature>
<organism>
    <name type="scientific">Francisella tularensis subsp. tularensis (strain FSC 198)</name>
    <dbReference type="NCBI Taxonomy" id="393115"/>
    <lineage>
        <taxon>Bacteria</taxon>
        <taxon>Pseudomonadati</taxon>
        <taxon>Pseudomonadota</taxon>
        <taxon>Gammaproteobacteria</taxon>
        <taxon>Thiotrichales</taxon>
        <taxon>Francisellaceae</taxon>
        <taxon>Francisella</taxon>
    </lineage>
</organism>
<name>SECB2_FRAT1</name>
<proteinExistence type="inferred from homology"/>
<gene>
    <name evidence="1" type="primary">secB2</name>
    <name type="ordered locus">FTF1749</name>
</gene>
<protein>
    <recommendedName>
        <fullName evidence="1">Protein-export protein SecB 2</fullName>
    </recommendedName>
</protein>